<reference key="1">
    <citation type="journal article" date="1995" name="Plant Physiol.">
        <title>Nucleotide sequence of a stearoyl-acyl carrier protein desaturase cDNA from developing seeds of rice.</title>
        <authorList>
            <person name="Akagi H."/>
            <person name="Baba T."/>
            <person name="Shimada H."/>
            <person name="Fujimura T."/>
        </authorList>
    </citation>
    <scope>NUCLEOTIDE SEQUENCE [MRNA]</scope>
    <source>
        <strain>cv. Nipponbare</strain>
        <tissue>Seed</tissue>
    </source>
</reference>
<reference key="2">
    <citation type="journal article" date="2002" name="Nature">
        <title>Sequence and analysis of rice chromosome 4.</title>
        <authorList>
            <person name="Feng Q."/>
            <person name="Zhang Y."/>
            <person name="Hao P."/>
            <person name="Wang S."/>
            <person name="Fu G."/>
            <person name="Huang Y."/>
            <person name="Li Y."/>
            <person name="Zhu J."/>
            <person name="Liu Y."/>
            <person name="Hu X."/>
            <person name="Jia P."/>
            <person name="Zhang Y."/>
            <person name="Zhao Q."/>
            <person name="Ying K."/>
            <person name="Yu S."/>
            <person name="Tang Y."/>
            <person name="Weng Q."/>
            <person name="Zhang L."/>
            <person name="Lu Y."/>
            <person name="Mu J."/>
            <person name="Lu Y."/>
            <person name="Zhang L.S."/>
            <person name="Yu Z."/>
            <person name="Fan D."/>
            <person name="Liu X."/>
            <person name="Lu T."/>
            <person name="Li C."/>
            <person name="Wu Y."/>
            <person name="Sun T."/>
            <person name="Lei H."/>
            <person name="Li T."/>
            <person name="Hu H."/>
            <person name="Guan J."/>
            <person name="Wu M."/>
            <person name="Zhang R."/>
            <person name="Zhou B."/>
            <person name="Chen Z."/>
            <person name="Chen L."/>
            <person name="Jin Z."/>
            <person name="Wang R."/>
            <person name="Yin H."/>
            <person name="Cai Z."/>
            <person name="Ren S."/>
            <person name="Lv G."/>
            <person name="Gu W."/>
            <person name="Zhu G."/>
            <person name="Tu Y."/>
            <person name="Jia J."/>
            <person name="Zhang Y."/>
            <person name="Chen J."/>
            <person name="Kang H."/>
            <person name="Chen X."/>
            <person name="Shao C."/>
            <person name="Sun Y."/>
            <person name="Hu Q."/>
            <person name="Zhang X."/>
            <person name="Zhang W."/>
            <person name="Wang L."/>
            <person name="Ding C."/>
            <person name="Sheng H."/>
            <person name="Gu J."/>
            <person name="Chen S."/>
            <person name="Ni L."/>
            <person name="Zhu F."/>
            <person name="Chen W."/>
            <person name="Lan L."/>
            <person name="Lai Y."/>
            <person name="Cheng Z."/>
            <person name="Gu M."/>
            <person name="Jiang J."/>
            <person name="Li J."/>
            <person name="Hong G."/>
            <person name="Xue Y."/>
            <person name="Han B."/>
        </authorList>
    </citation>
    <scope>NUCLEOTIDE SEQUENCE [LARGE SCALE GENOMIC DNA]</scope>
    <source>
        <strain>cv. Nipponbare</strain>
    </source>
</reference>
<reference key="3">
    <citation type="journal article" date="2005" name="Nature">
        <title>The map-based sequence of the rice genome.</title>
        <authorList>
            <consortium name="International rice genome sequencing project (IRGSP)"/>
        </authorList>
    </citation>
    <scope>NUCLEOTIDE SEQUENCE [LARGE SCALE GENOMIC DNA]</scope>
    <source>
        <strain>cv. Nipponbare</strain>
    </source>
</reference>
<reference key="4">
    <citation type="journal article" date="2008" name="Nucleic Acids Res.">
        <title>The rice annotation project database (RAP-DB): 2008 update.</title>
        <authorList>
            <consortium name="The rice annotation project (RAP)"/>
        </authorList>
    </citation>
    <scope>GENOME REANNOTATION</scope>
    <source>
        <strain>cv. Nipponbare</strain>
    </source>
</reference>
<reference key="5">
    <citation type="journal article" date="2013" name="Rice">
        <title>Improvement of the Oryza sativa Nipponbare reference genome using next generation sequence and optical map data.</title>
        <authorList>
            <person name="Kawahara Y."/>
            <person name="de la Bastide M."/>
            <person name="Hamilton J.P."/>
            <person name="Kanamori H."/>
            <person name="McCombie W.R."/>
            <person name="Ouyang S."/>
            <person name="Schwartz D.C."/>
            <person name="Tanaka T."/>
            <person name="Wu J."/>
            <person name="Zhou S."/>
            <person name="Childs K.L."/>
            <person name="Davidson R.M."/>
            <person name="Lin H."/>
            <person name="Quesada-Ocampo L."/>
            <person name="Vaillancourt B."/>
            <person name="Sakai H."/>
            <person name="Lee S.S."/>
            <person name="Kim J."/>
            <person name="Numa H."/>
            <person name="Itoh T."/>
            <person name="Buell C.R."/>
            <person name="Matsumoto T."/>
        </authorList>
    </citation>
    <scope>GENOME REANNOTATION</scope>
    <source>
        <strain>cv. Nipponbare</strain>
    </source>
</reference>
<reference key="6">
    <citation type="journal article" date="2005" name="PLoS Biol.">
        <title>The genomes of Oryza sativa: a history of duplications.</title>
        <authorList>
            <person name="Yu J."/>
            <person name="Wang J."/>
            <person name="Lin W."/>
            <person name="Li S."/>
            <person name="Li H."/>
            <person name="Zhou J."/>
            <person name="Ni P."/>
            <person name="Dong W."/>
            <person name="Hu S."/>
            <person name="Zeng C."/>
            <person name="Zhang J."/>
            <person name="Zhang Y."/>
            <person name="Li R."/>
            <person name="Xu Z."/>
            <person name="Li S."/>
            <person name="Li X."/>
            <person name="Zheng H."/>
            <person name="Cong L."/>
            <person name="Lin L."/>
            <person name="Yin J."/>
            <person name="Geng J."/>
            <person name="Li G."/>
            <person name="Shi J."/>
            <person name="Liu J."/>
            <person name="Lv H."/>
            <person name="Li J."/>
            <person name="Wang J."/>
            <person name="Deng Y."/>
            <person name="Ran L."/>
            <person name="Shi X."/>
            <person name="Wang X."/>
            <person name="Wu Q."/>
            <person name="Li C."/>
            <person name="Ren X."/>
            <person name="Wang J."/>
            <person name="Wang X."/>
            <person name="Li D."/>
            <person name="Liu D."/>
            <person name="Zhang X."/>
            <person name="Ji Z."/>
            <person name="Zhao W."/>
            <person name="Sun Y."/>
            <person name="Zhang Z."/>
            <person name="Bao J."/>
            <person name="Han Y."/>
            <person name="Dong L."/>
            <person name="Ji J."/>
            <person name="Chen P."/>
            <person name="Wu S."/>
            <person name="Liu J."/>
            <person name="Xiao Y."/>
            <person name="Bu D."/>
            <person name="Tan J."/>
            <person name="Yang L."/>
            <person name="Ye C."/>
            <person name="Zhang J."/>
            <person name="Xu J."/>
            <person name="Zhou Y."/>
            <person name="Yu Y."/>
            <person name="Zhang B."/>
            <person name="Zhuang S."/>
            <person name="Wei H."/>
            <person name="Liu B."/>
            <person name="Lei M."/>
            <person name="Yu H."/>
            <person name="Li Y."/>
            <person name="Xu H."/>
            <person name="Wei S."/>
            <person name="He X."/>
            <person name="Fang L."/>
            <person name="Zhang Z."/>
            <person name="Zhang Y."/>
            <person name="Huang X."/>
            <person name="Su Z."/>
            <person name="Tong W."/>
            <person name="Li J."/>
            <person name="Tong Z."/>
            <person name="Li S."/>
            <person name="Ye J."/>
            <person name="Wang L."/>
            <person name="Fang L."/>
            <person name="Lei T."/>
            <person name="Chen C.-S."/>
            <person name="Chen H.-C."/>
            <person name="Xu Z."/>
            <person name="Li H."/>
            <person name="Huang H."/>
            <person name="Zhang F."/>
            <person name="Xu H."/>
            <person name="Li N."/>
            <person name="Zhao C."/>
            <person name="Li S."/>
            <person name="Dong L."/>
            <person name="Huang Y."/>
            <person name="Li L."/>
            <person name="Xi Y."/>
            <person name="Qi Q."/>
            <person name="Li W."/>
            <person name="Zhang B."/>
            <person name="Hu W."/>
            <person name="Zhang Y."/>
            <person name="Tian X."/>
            <person name="Jiao Y."/>
            <person name="Liang X."/>
            <person name="Jin J."/>
            <person name="Gao L."/>
            <person name="Zheng W."/>
            <person name="Hao B."/>
            <person name="Liu S.-M."/>
            <person name="Wang W."/>
            <person name="Yuan L."/>
            <person name="Cao M."/>
            <person name="McDermott J."/>
            <person name="Samudrala R."/>
            <person name="Wang J."/>
            <person name="Wong G.K.-S."/>
            <person name="Yang H."/>
        </authorList>
    </citation>
    <scope>NUCLEOTIDE SEQUENCE [LARGE SCALE GENOMIC DNA]</scope>
    <source>
        <strain>cv. Nipponbare</strain>
    </source>
</reference>
<reference key="7">
    <citation type="journal article" date="2003" name="Science">
        <title>Collection, mapping, and annotation of over 28,000 cDNA clones from japonica rice.</title>
        <authorList>
            <consortium name="The rice full-length cDNA consortium"/>
        </authorList>
    </citation>
    <scope>NUCLEOTIDE SEQUENCE [LARGE SCALE MRNA]</scope>
    <source>
        <strain>cv. Nipponbare</strain>
    </source>
</reference>
<reference key="8">
    <citation type="journal article" date="2009" name="Mol. Plant Microbe Interact.">
        <title>Suppression of the rice fatty-acid desaturase gene OsSSI2 enhances resistance to blast and leaf blight diseases in rice.</title>
        <authorList>
            <person name="Jiang C.J."/>
            <person name="Shimono M."/>
            <person name="Maeda S."/>
            <person name="Inoue H."/>
            <person name="Mori M."/>
            <person name="Hasegawa M."/>
            <person name="Sugano S."/>
            <person name="Takatsuji H."/>
        </authorList>
    </citation>
    <scope>GENE FAMILY</scope>
</reference>
<feature type="transit peptide" description="Chloroplast" evidence="1">
    <location>
        <begin position="1"/>
        <end position="31"/>
    </location>
</feature>
<feature type="chain" id="PRO_0000007136" description="Stearoyl-[acyl-carrier-protein] 9-desaturase 5, chloroplastic">
    <location>
        <begin position="32"/>
        <end position="390"/>
    </location>
</feature>
<feature type="region of interest" description="Disordered" evidence="3">
    <location>
        <begin position="1"/>
        <end position="22"/>
    </location>
</feature>
<feature type="binding site" evidence="2">
    <location>
        <position position="132"/>
    </location>
    <ligand>
        <name>Fe cation</name>
        <dbReference type="ChEBI" id="CHEBI:24875"/>
        <label>1</label>
    </ligand>
</feature>
<feature type="binding site" evidence="2">
    <location>
        <position position="170"/>
    </location>
    <ligand>
        <name>Fe cation</name>
        <dbReference type="ChEBI" id="CHEBI:24875"/>
        <label>1</label>
    </ligand>
</feature>
<feature type="binding site" evidence="2">
    <location>
        <position position="170"/>
    </location>
    <ligand>
        <name>Fe cation</name>
        <dbReference type="ChEBI" id="CHEBI:24875"/>
        <label>2</label>
    </ligand>
</feature>
<feature type="binding site" evidence="2">
    <location>
        <position position="173"/>
    </location>
    <ligand>
        <name>Fe cation</name>
        <dbReference type="ChEBI" id="CHEBI:24875"/>
        <label>1</label>
    </ligand>
</feature>
<feature type="binding site" evidence="2">
    <location>
        <position position="223"/>
    </location>
    <ligand>
        <name>Fe cation</name>
        <dbReference type="ChEBI" id="CHEBI:24875"/>
        <label>2</label>
    </ligand>
</feature>
<feature type="binding site" evidence="2">
    <location>
        <position position="256"/>
    </location>
    <ligand>
        <name>Fe cation</name>
        <dbReference type="ChEBI" id="CHEBI:24875"/>
        <label>1</label>
    </ligand>
</feature>
<feature type="binding site" evidence="2">
    <location>
        <position position="256"/>
    </location>
    <ligand>
        <name>Fe cation</name>
        <dbReference type="ChEBI" id="CHEBI:24875"/>
        <label>2</label>
    </ligand>
</feature>
<feature type="binding site" evidence="2">
    <location>
        <position position="259"/>
    </location>
    <ligand>
        <name>Fe cation</name>
        <dbReference type="ChEBI" id="CHEBI:24875"/>
        <label>2</label>
    </ligand>
</feature>
<feature type="sequence conflict" description="In Ref. 1; BAA07631." evidence="4" ref="1">
    <original>S</original>
    <variation>Y</variation>
    <location>
        <position position="12"/>
    </location>
</feature>
<feature type="sequence conflict" description="In Ref. 1; BAA07631." evidence="4" ref="1">
    <original>PV</original>
    <variation>KM</variation>
    <location>
        <begin position="27"/>
        <end position="28"/>
    </location>
</feature>
<feature type="sequence conflict" description="In Ref. 1; BAA07631." evidence="4" ref="1">
    <original>K</original>
    <variation>N</variation>
    <location>
        <position position="288"/>
    </location>
</feature>
<feature type="sequence conflict" description="In Ref. 1; BAA07631." evidence="4" ref="1">
    <original>P</original>
    <variation>T</variation>
    <location>
        <position position="293"/>
    </location>
</feature>
<feature type="sequence conflict" description="In Ref. 1; BAA07631." evidence="4" ref="1">
    <original>F</original>
    <variation>L</variation>
    <location>
        <position position="309"/>
    </location>
</feature>
<feature type="sequence conflict" description="In Ref. 1; BAA07631." evidence="4" ref="1">
    <original>A</original>
    <variation>V</variation>
    <location>
        <position position="321"/>
    </location>
</feature>
<feature type="sequence conflict" description="In Ref. 1; BAA07631." evidence="4" ref="1">
    <original>I</original>
    <variation>M</variation>
    <location>
        <position position="327"/>
    </location>
</feature>
<name>STAD5_ORYSJ</name>
<evidence type="ECO:0000250" key="1">
    <source>
        <dbReference type="UniProtKB" id="P22243"/>
    </source>
</evidence>
<evidence type="ECO:0000250" key="2">
    <source>
        <dbReference type="UniProtKB" id="P22337"/>
    </source>
</evidence>
<evidence type="ECO:0000256" key="3">
    <source>
        <dbReference type="SAM" id="MobiDB-lite"/>
    </source>
</evidence>
<evidence type="ECO:0000305" key="4"/>
<comment type="function">
    <text evidence="2">Converts stearoyl-ACP to oleoyl-ACP by introduction of a cis double bond between carbons 9 and 10 of the acyl chain.</text>
</comment>
<comment type="catalytic activity">
    <reaction evidence="2">
        <text>octadecanoyl-[ACP] + 2 reduced [2Fe-2S]-[ferredoxin] + O2 + 2 H(+) = (9Z)-octadecenoyl-[ACP] + 2 oxidized [2Fe-2S]-[ferredoxin] + 2 H2O</text>
        <dbReference type="Rhea" id="RHEA:11776"/>
        <dbReference type="Rhea" id="RHEA-COMP:9656"/>
        <dbReference type="Rhea" id="RHEA-COMP:9924"/>
        <dbReference type="Rhea" id="RHEA-COMP:10000"/>
        <dbReference type="Rhea" id="RHEA-COMP:10001"/>
        <dbReference type="ChEBI" id="CHEBI:15377"/>
        <dbReference type="ChEBI" id="CHEBI:15378"/>
        <dbReference type="ChEBI" id="CHEBI:15379"/>
        <dbReference type="ChEBI" id="CHEBI:33737"/>
        <dbReference type="ChEBI" id="CHEBI:33738"/>
        <dbReference type="ChEBI" id="CHEBI:78495"/>
        <dbReference type="ChEBI" id="CHEBI:78783"/>
        <dbReference type="EC" id="1.14.19.2"/>
    </reaction>
</comment>
<comment type="cofactor">
    <cofactor evidence="2">
        <name>Fe(2+)</name>
        <dbReference type="ChEBI" id="CHEBI:29033"/>
    </cofactor>
    <text evidence="2">Binds 2 Fe(2+) ions per subunit.</text>
</comment>
<comment type="pathway">
    <text>Lipid metabolism; fatty acid metabolism.</text>
</comment>
<comment type="subunit">
    <text evidence="2">Homodimer.</text>
</comment>
<comment type="subcellular location">
    <subcellularLocation>
        <location evidence="2">Plastid</location>
        <location evidence="2">Chloroplast</location>
    </subcellularLocation>
    <subcellularLocation>
        <location evidence="2">Plastid</location>
    </subcellularLocation>
    <text>In green tissue, found in chloroplasts. In non-photosynthetic tissue, found in plastids.</text>
</comment>
<comment type="similarity">
    <text evidence="4">Belongs to the fatty acid desaturase type 2 family.</text>
</comment>
<comment type="sequence caution" evidence="4">
    <conflict type="erroneous gene model prediction">
        <sequence resource="EMBL-CDS" id="CAE03992"/>
    </conflict>
</comment>
<protein>
    <recommendedName>
        <fullName>Stearoyl-[acyl-carrier-protein] 9-desaturase 5, chloroplastic</fullName>
        <shortName>Stearoyl-ACP desaturase 5</shortName>
        <ecNumber evidence="2">1.14.19.2</ecNumber>
    </recommendedName>
    <alternativeName>
        <fullName>Acyl-[acyl-carrier-protein] desaturase 5</fullName>
    </alternativeName>
</protein>
<sequence length="390" mass="44341">MAFAASHTASPSSCGGVAQRRSNGMSPVVAMASTINRVKTAKKPYTPPREVHLQVKHSLPPQKREIFDSLQPWAKENLLNLLKPVEKSWQPQDFLPDPSSDGFYDEVKELRERAKEIPDDYFVCLVGDMVTEEALPTYQTMLNTLDGVRDETGASPTTWAVWTRAWTAEENRHGDLLNKYMYLTGRVDMKQIEKTIQYLIGSGMDPGTENNPYLGFLYTSFQERATFISHGNTARHAKEYGDLKLAQICGTIAADEKRHETAYTKIVEKLFEIDPDYTVLAFADMMRKKISMPAHLMYDGKDDNLFEHFSAVAQRLGVYTARDYADILEFLVQRWKVADLTGLSGEGRRAQDFVCTLAPRIRRLDERAQARAKQAPVIPFSWVYDRKVQL</sequence>
<accession>Q40731</accession>
<accession>A0A0P0W9B6</accession>
<accession>Q0JDS9</accession>
<accession>Q7XNQ5</accession>
<keyword id="KW-0150">Chloroplast</keyword>
<keyword id="KW-0275">Fatty acid biosynthesis</keyword>
<keyword id="KW-0276">Fatty acid metabolism</keyword>
<keyword id="KW-0408">Iron</keyword>
<keyword id="KW-0444">Lipid biosynthesis</keyword>
<keyword id="KW-0443">Lipid metabolism</keyword>
<keyword id="KW-0479">Metal-binding</keyword>
<keyword id="KW-0560">Oxidoreductase</keyword>
<keyword id="KW-0934">Plastid</keyword>
<keyword id="KW-1185">Reference proteome</keyword>
<keyword id="KW-0809">Transit peptide</keyword>
<gene>
    <name type="ordered locus">Os04g0379900</name>
    <name type="ordered locus">LOC_Os04g31070</name>
    <name type="ORF">OsJ_14516</name>
    <name type="ORF">OSJNBb0089B03.6</name>
</gene>
<organism>
    <name type="scientific">Oryza sativa subsp. japonica</name>
    <name type="common">Rice</name>
    <dbReference type="NCBI Taxonomy" id="39947"/>
    <lineage>
        <taxon>Eukaryota</taxon>
        <taxon>Viridiplantae</taxon>
        <taxon>Streptophyta</taxon>
        <taxon>Embryophyta</taxon>
        <taxon>Tracheophyta</taxon>
        <taxon>Spermatophyta</taxon>
        <taxon>Magnoliopsida</taxon>
        <taxon>Liliopsida</taxon>
        <taxon>Poales</taxon>
        <taxon>Poaceae</taxon>
        <taxon>BOP clade</taxon>
        <taxon>Oryzoideae</taxon>
        <taxon>Oryzeae</taxon>
        <taxon>Oryzinae</taxon>
        <taxon>Oryza</taxon>
        <taxon>Oryza sativa</taxon>
    </lineage>
</organism>
<proteinExistence type="evidence at transcript level"/>
<dbReference type="EC" id="1.14.19.2" evidence="2"/>
<dbReference type="EMBL" id="D38753">
    <property type="protein sequence ID" value="BAA07631.1"/>
    <property type="molecule type" value="mRNA"/>
</dbReference>
<dbReference type="EMBL" id="AL607000">
    <property type="protein sequence ID" value="CAE03992.1"/>
    <property type="status" value="ALT_SEQ"/>
    <property type="molecule type" value="Genomic_DNA"/>
</dbReference>
<dbReference type="EMBL" id="AP008210">
    <property type="protein sequence ID" value="BAF14508.1"/>
    <property type="molecule type" value="Genomic_DNA"/>
</dbReference>
<dbReference type="EMBL" id="AP014960">
    <property type="protein sequence ID" value="BAS88879.1"/>
    <property type="molecule type" value="Genomic_DNA"/>
</dbReference>
<dbReference type="EMBL" id="CM000141">
    <property type="protein sequence ID" value="EEE60868.1"/>
    <property type="molecule type" value="Genomic_DNA"/>
</dbReference>
<dbReference type="EMBL" id="AK065340">
    <property type="protein sequence ID" value="BAG89478.1"/>
    <property type="molecule type" value="mRNA"/>
</dbReference>
<dbReference type="PIR" id="T04097">
    <property type="entry name" value="T04097"/>
</dbReference>
<dbReference type="RefSeq" id="XP_015636259.1">
    <property type="nucleotide sequence ID" value="XM_015780773.1"/>
</dbReference>
<dbReference type="SMR" id="Q40731"/>
<dbReference type="FunCoup" id="Q40731">
    <property type="interactions" value="55"/>
</dbReference>
<dbReference type="STRING" id="39947.Q40731"/>
<dbReference type="PaxDb" id="39947-Q40731"/>
<dbReference type="EnsemblPlants" id="Os04t0379900-01">
    <property type="protein sequence ID" value="Os04t0379900-01"/>
    <property type="gene ID" value="Os04g0379900"/>
</dbReference>
<dbReference type="Gramene" id="Os04t0379900-01">
    <property type="protein sequence ID" value="Os04t0379900-01"/>
    <property type="gene ID" value="Os04g0379900"/>
</dbReference>
<dbReference type="KEGG" id="dosa:Os04g0379900"/>
<dbReference type="eggNOG" id="ENOG502QRJK">
    <property type="taxonomic scope" value="Eukaryota"/>
</dbReference>
<dbReference type="HOGENOM" id="CLU_034505_1_1_1"/>
<dbReference type="InParanoid" id="Q40731"/>
<dbReference type="OMA" id="GMPNFRR"/>
<dbReference type="OrthoDB" id="1924153at2759"/>
<dbReference type="UniPathway" id="UPA00199"/>
<dbReference type="Proteomes" id="UP000000763">
    <property type="component" value="Chromosome 4"/>
</dbReference>
<dbReference type="Proteomes" id="UP000007752">
    <property type="component" value="Chromosome 4"/>
</dbReference>
<dbReference type="Proteomes" id="UP000059680">
    <property type="component" value="Chromosome 4"/>
</dbReference>
<dbReference type="GO" id="GO:0009507">
    <property type="term" value="C:chloroplast"/>
    <property type="evidence" value="ECO:0007669"/>
    <property type="project" value="UniProtKB-SubCell"/>
</dbReference>
<dbReference type="GO" id="GO:0046872">
    <property type="term" value="F:metal ion binding"/>
    <property type="evidence" value="ECO:0007669"/>
    <property type="project" value="UniProtKB-KW"/>
</dbReference>
<dbReference type="GO" id="GO:0045300">
    <property type="term" value="F:stearoyl-[ACP] desaturase activity"/>
    <property type="evidence" value="ECO:0000318"/>
    <property type="project" value="GO_Central"/>
</dbReference>
<dbReference type="GO" id="GO:0006633">
    <property type="term" value="P:fatty acid biosynthetic process"/>
    <property type="evidence" value="ECO:0007669"/>
    <property type="project" value="UniProtKB-KW"/>
</dbReference>
<dbReference type="GO" id="GO:0006631">
    <property type="term" value="P:fatty acid metabolic process"/>
    <property type="evidence" value="ECO:0000318"/>
    <property type="project" value="GO_Central"/>
</dbReference>
<dbReference type="CDD" id="cd01050">
    <property type="entry name" value="Acyl_ACP_Desat"/>
    <property type="match status" value="1"/>
</dbReference>
<dbReference type="FunFam" id="1.10.620.20:FF:000002">
    <property type="entry name" value="Stearoyl-[acyl-carrier-protein] 9-desaturase, chloroplastic"/>
    <property type="match status" value="1"/>
</dbReference>
<dbReference type="Gene3D" id="1.10.620.20">
    <property type="entry name" value="Ribonucleotide Reductase, subunit A"/>
    <property type="match status" value="1"/>
</dbReference>
<dbReference type="InterPro" id="IPR005803">
    <property type="entry name" value="FADS-2_CS"/>
</dbReference>
<dbReference type="InterPro" id="IPR005067">
    <property type="entry name" value="Fatty_acid_desaturase-2"/>
</dbReference>
<dbReference type="InterPro" id="IPR009078">
    <property type="entry name" value="Ferritin-like_SF"/>
</dbReference>
<dbReference type="InterPro" id="IPR012348">
    <property type="entry name" value="RNR-like"/>
</dbReference>
<dbReference type="PANTHER" id="PTHR31155">
    <property type="entry name" value="ACYL- ACYL-CARRIER-PROTEIN DESATURASE-RELATED"/>
    <property type="match status" value="1"/>
</dbReference>
<dbReference type="PANTHER" id="PTHR31155:SF11">
    <property type="entry name" value="STEAROYL-[ACYL-CARRIER-PROTEIN] 9-DESATURASE 5, CHLOROPLASTIC"/>
    <property type="match status" value="1"/>
</dbReference>
<dbReference type="Pfam" id="PF03405">
    <property type="entry name" value="FA_desaturase_2"/>
    <property type="match status" value="1"/>
</dbReference>
<dbReference type="PIRSF" id="PIRSF000346">
    <property type="entry name" value="Dlt9_acylACP_des"/>
    <property type="match status" value="1"/>
</dbReference>
<dbReference type="SUPFAM" id="SSF47240">
    <property type="entry name" value="Ferritin-like"/>
    <property type="match status" value="1"/>
</dbReference>
<dbReference type="PROSITE" id="PS00574">
    <property type="entry name" value="FATTY_ACID_DESATUR_2"/>
    <property type="match status" value="1"/>
</dbReference>